<evidence type="ECO:0000250" key="1"/>
<evidence type="ECO:0000255" key="2"/>
<evidence type="ECO:0000303" key="3">
    <source>
    </source>
</evidence>
<evidence type="ECO:0000305" key="4"/>
<evidence type="ECO:0000305" key="5">
    <source>
    </source>
</evidence>
<dbReference type="SMR" id="P69767"/>
<dbReference type="ConoServer" id="1717">
    <property type="toxin name" value="Vc5.3 precursor"/>
</dbReference>
<dbReference type="GO" id="GO:0005576">
    <property type="term" value="C:extracellular region"/>
    <property type="evidence" value="ECO:0007669"/>
    <property type="project" value="UniProtKB-SubCell"/>
</dbReference>
<dbReference type="GO" id="GO:0099106">
    <property type="term" value="F:ion channel regulator activity"/>
    <property type="evidence" value="ECO:0007669"/>
    <property type="project" value="UniProtKB-KW"/>
</dbReference>
<dbReference type="GO" id="GO:0090729">
    <property type="term" value="F:toxin activity"/>
    <property type="evidence" value="ECO:0007669"/>
    <property type="project" value="UniProtKB-KW"/>
</dbReference>
<dbReference type="InterPro" id="IPR031565">
    <property type="entry name" value="T-conotoxin"/>
</dbReference>
<dbReference type="Pfam" id="PF16981">
    <property type="entry name" value="Chi-conotoxin"/>
    <property type="match status" value="1"/>
</dbReference>
<accession>P69767</accession>
<name>CT53_CONVC</name>
<feature type="signal peptide" evidence="2">
    <location>
        <begin position="1" status="less than"/>
        <end position="15"/>
    </location>
</feature>
<feature type="propeptide" id="PRO_0000035047" evidence="1">
    <location>
        <begin position="16"/>
        <end position="41"/>
    </location>
</feature>
<feature type="peptide" id="PRO_0000035048" description="Conotoxin Vc5.3">
    <location>
        <begin position="42"/>
        <end position="53"/>
    </location>
</feature>
<feature type="non-terminal residue">
    <location>
        <position position="1"/>
    </location>
</feature>
<protein>
    <recommendedName>
        <fullName evidence="3">Conotoxin Vc5.3</fullName>
    </recommendedName>
</protein>
<keyword id="KW-0165">Cleavage on pair of basic residues</keyword>
<keyword id="KW-1015">Disulfide bond</keyword>
<keyword id="KW-0872">Ion channel impairing toxin</keyword>
<keyword id="KW-0528">Neurotoxin</keyword>
<keyword id="KW-0964">Secreted</keyword>
<keyword id="KW-0732">Signal</keyword>
<keyword id="KW-0800">Toxin</keyword>
<comment type="subcellular location">
    <subcellularLocation>
        <location evidence="5">Secreted</location>
    </subcellularLocation>
</comment>
<comment type="tissue specificity">
    <text evidence="5">Expressed by the venom duct.</text>
</comment>
<comment type="domain">
    <text evidence="4">The cysteine framework is V (CC-CC).</text>
</comment>
<comment type="PTM">
    <text evidence="4">Contains 2 disulfide bonds that can be either 'C1-C3, C2-C4' or 'C1-C4, C2-C3', since these disulfide connectivities have been observed for conotoxins with cysteine framework V (for examples, see AC P0DQQ7 and AC P81755).</text>
</comment>
<comment type="similarity">
    <text evidence="4">Belongs to the conotoxin T superfamily.</text>
</comment>
<organism>
    <name type="scientific">Conus victoriae</name>
    <name type="common">Queen Victoria cone</name>
    <dbReference type="NCBI Taxonomy" id="319920"/>
    <lineage>
        <taxon>Eukaryota</taxon>
        <taxon>Metazoa</taxon>
        <taxon>Spiralia</taxon>
        <taxon>Lophotrochozoa</taxon>
        <taxon>Mollusca</taxon>
        <taxon>Gastropoda</taxon>
        <taxon>Caenogastropoda</taxon>
        <taxon>Neogastropoda</taxon>
        <taxon>Conoidea</taxon>
        <taxon>Conidae</taxon>
        <taxon>Conus</taxon>
        <taxon>Cylinder</taxon>
    </lineage>
</organism>
<proteinExistence type="evidence at transcript level"/>
<sequence length="53" mass="5766">VILLLLTASAPSVDARPKTEDVPLSSFRDNTKSTLQRLLKRVNCCGIDESCCS</sequence>
<reference key="1">
    <citation type="journal article" date="2004" name="J. Mass Spectrom.">
        <title>Determining sequences and post-translational modifications of novel conotoxins in Conus victoriae using cDNA sequencing and mass spectrometry.</title>
        <authorList>
            <person name="Jakubowski J.A."/>
            <person name="Keays D.A."/>
            <person name="Kelley W.P."/>
            <person name="Sandall D.W."/>
            <person name="Bingham J.-P."/>
            <person name="Livett B.G."/>
            <person name="Gayler K.R."/>
            <person name="Sweedler J.V."/>
        </authorList>
    </citation>
    <scope>NUCLEOTIDE SEQUENCE [MRNA]</scope>
    <source>
        <tissue>Venom duct</tissue>
    </source>
</reference>